<protein>
    <recommendedName>
        <fullName>Bcl-2-like protein 2</fullName>
        <shortName>Bcl2-L-2</shortName>
    </recommendedName>
    <alternativeName>
        <fullName>Apoptosis regulator Bcl-W</fullName>
    </alternativeName>
</protein>
<keyword id="KW-0002">3D-structure</keyword>
<keyword id="KW-0007">Acetylation</keyword>
<keyword id="KW-0053">Apoptosis</keyword>
<keyword id="KW-0472">Membrane</keyword>
<keyword id="KW-0496">Mitochondrion</keyword>
<keyword id="KW-1185">Reference proteome</keyword>
<proteinExistence type="evidence at protein level"/>
<organism>
    <name type="scientific">Bos taurus</name>
    <name type="common">Bovine</name>
    <dbReference type="NCBI Taxonomy" id="9913"/>
    <lineage>
        <taxon>Eukaryota</taxon>
        <taxon>Metazoa</taxon>
        <taxon>Chordata</taxon>
        <taxon>Craniata</taxon>
        <taxon>Vertebrata</taxon>
        <taxon>Euteleostomi</taxon>
        <taxon>Mammalia</taxon>
        <taxon>Eutheria</taxon>
        <taxon>Laurasiatheria</taxon>
        <taxon>Artiodactyla</taxon>
        <taxon>Ruminantia</taxon>
        <taxon>Pecora</taxon>
        <taxon>Bovidae</taxon>
        <taxon>Bovinae</taxon>
        <taxon>Bos</taxon>
    </lineage>
</organism>
<gene>
    <name type="primary">BCL2L2</name>
</gene>
<evidence type="ECO:0000250" key="1"/>
<evidence type="ECO:0000250" key="2">
    <source>
        <dbReference type="UniProtKB" id="P70345"/>
    </source>
</evidence>
<evidence type="ECO:0000250" key="3">
    <source>
        <dbReference type="UniProtKB" id="Q92843"/>
    </source>
</evidence>
<evidence type="ECO:0000305" key="4"/>
<evidence type="ECO:0007829" key="5">
    <source>
        <dbReference type="PDB" id="4K5A"/>
    </source>
</evidence>
<evidence type="ECO:0007829" key="6">
    <source>
        <dbReference type="PDB" id="4K5B"/>
    </source>
</evidence>
<name>B2CL2_BOVIN</name>
<comment type="function">
    <text evidence="1">Promotes cell survival. Blocks dexamethasone-induced apoptosis. Mediates survival of postmitotic Sertoli cells by suppressing death-promoting activity of BAX (By similarity).</text>
</comment>
<comment type="subunit">
    <text evidence="2">Interacts with HIF3A (via C-terminus domain). Interacts with BOP.</text>
</comment>
<comment type="subcellular location">
    <subcellularLocation>
        <location evidence="1">Mitochondrion membrane</location>
        <topology evidence="1">Peripheral membrane protein</topology>
    </subcellularLocation>
    <text evidence="1">Loosely associated with the mitochondrial membrane in healthy cells. During apoptosis, tightly bound to the membrane (By similarity).</text>
</comment>
<comment type="domain">
    <text evidence="1">The BH4 motif seems to be involved in the anti-apoptotic function.</text>
</comment>
<comment type="domain">
    <text evidence="1">The BH1 and BH2 motifs form a hydrophobic groove which acts as a docking site for the BH3 domain of some pro-apoptotic proteins. The C-terminal residues of BCL2L2 fold into the BH3-binding cleft and modulate pro-survival activity by regulating ligand access. When BH3 domain-containing proteins bind, they displace the C-terminus, allowing its insertion into the membrane and neutralizing the pro-survival activity of BCL2L2 (By similarity).</text>
</comment>
<comment type="similarity">
    <text evidence="4">Belongs to the Bcl-2 family.</text>
</comment>
<feature type="initiator methionine" description="Removed" evidence="3">
    <location>
        <position position="1"/>
    </location>
</feature>
<feature type="chain" id="PRO_0000247324" description="Bcl-2-like protein 2">
    <location>
        <begin position="2"/>
        <end position="193"/>
    </location>
</feature>
<feature type="short sequence motif" description="BH4">
    <location>
        <begin position="9"/>
        <end position="29"/>
    </location>
</feature>
<feature type="short sequence motif" description="BH1">
    <location>
        <begin position="85"/>
        <end position="104"/>
    </location>
</feature>
<feature type="short sequence motif" description="BH2">
    <location>
        <begin position="136"/>
        <end position="151"/>
    </location>
</feature>
<feature type="modified residue" description="N-acetylalanine" evidence="3">
    <location>
        <position position="2"/>
    </location>
</feature>
<feature type="helix" evidence="5">
    <location>
        <begin position="8"/>
        <end position="24"/>
    </location>
</feature>
<feature type="strand" evidence="5">
    <location>
        <begin position="30"/>
        <end position="32"/>
    </location>
</feature>
<feature type="strand" evidence="5">
    <location>
        <begin position="35"/>
        <end position="37"/>
    </location>
</feature>
<feature type="helix" evidence="5">
    <location>
        <begin position="41"/>
        <end position="56"/>
    </location>
</feature>
<feature type="strand" evidence="6">
    <location>
        <begin position="57"/>
        <end position="59"/>
    </location>
</feature>
<feature type="helix" evidence="5">
    <location>
        <begin position="60"/>
        <end position="67"/>
    </location>
</feature>
<feature type="turn" evidence="5">
    <location>
        <begin position="72"/>
        <end position="74"/>
    </location>
</feature>
<feature type="helix" evidence="5">
    <location>
        <begin position="75"/>
        <end position="86"/>
    </location>
</feature>
<feature type="turn" evidence="5">
    <location>
        <begin position="87"/>
        <end position="89"/>
    </location>
</feature>
<feature type="helix" evidence="5">
    <location>
        <begin position="93"/>
        <end position="112"/>
    </location>
</feature>
<feature type="helix" evidence="5">
    <location>
        <begin position="118"/>
        <end position="132"/>
    </location>
</feature>
<feature type="helix" evidence="5">
    <location>
        <begin position="135"/>
        <end position="140"/>
    </location>
</feature>
<feature type="helix" evidence="5">
    <location>
        <begin position="143"/>
        <end position="151"/>
    </location>
</feature>
<accession>Q1RMX3</accession>
<sequence length="193" mass="20774">MATPASAPDTRALVADFVGYKLRQKGYVCGAGPGEGPAADPLHQAMRAAGDEFETRFRRTFSDLAAQLHVTPGSAQQRFTQVSDELFQGGPNWGRLVAFFVFGAALCAESVNKEMEPLVGQVQEWMVAYLETRLADWIHSSGGWAEFTALYGDGALEEARRLREGNWASVRTVLTGAVALGALVTVGAFFASK</sequence>
<reference key="1">
    <citation type="submission" date="2006-04" db="EMBL/GenBank/DDBJ databases">
        <authorList>
            <consortium name="NIH - Mammalian Gene Collection (MGC) project"/>
        </authorList>
    </citation>
    <scope>NUCLEOTIDE SEQUENCE [LARGE SCALE MRNA]</scope>
    <source>
        <strain>Hereford</strain>
        <tissue>Uterus</tissue>
    </source>
</reference>
<dbReference type="EMBL" id="BC114652">
    <property type="protein sequence ID" value="AAI14653.1"/>
    <property type="molecule type" value="mRNA"/>
</dbReference>
<dbReference type="RefSeq" id="NP_001070001.1">
    <property type="nucleotide sequence ID" value="NM_001076533.1"/>
</dbReference>
<dbReference type="RefSeq" id="XP_005211456.1">
    <property type="nucleotide sequence ID" value="XM_005211399.5"/>
</dbReference>
<dbReference type="RefSeq" id="XP_015328534.1">
    <property type="nucleotide sequence ID" value="XM_015473048.1"/>
</dbReference>
<dbReference type="RefSeq" id="XP_059746659.1">
    <property type="nucleotide sequence ID" value="XM_059890676.1"/>
</dbReference>
<dbReference type="PDB" id="4K5A">
    <property type="method" value="X-ray"/>
    <property type="resolution" value="1.50 A"/>
    <property type="chains" value="A=2-171"/>
</dbReference>
<dbReference type="PDB" id="4K5B">
    <property type="method" value="X-ray"/>
    <property type="resolution" value="1.85 A"/>
    <property type="chains" value="C/D=2-171"/>
</dbReference>
<dbReference type="PDBsum" id="4K5A"/>
<dbReference type="PDBsum" id="4K5B"/>
<dbReference type="SMR" id="Q1RMX3"/>
<dbReference type="FunCoup" id="Q1RMX3">
    <property type="interactions" value="432"/>
</dbReference>
<dbReference type="STRING" id="9913.ENSBTAP00000026248"/>
<dbReference type="PaxDb" id="9913-ENSBTAP00000026248"/>
<dbReference type="Ensembl" id="ENSBTAT00000026248.6">
    <property type="protein sequence ID" value="ENSBTAP00000026248.4"/>
    <property type="gene ID" value="ENSBTAG00000019692.6"/>
</dbReference>
<dbReference type="GeneID" id="767601"/>
<dbReference type="KEGG" id="bta:767601"/>
<dbReference type="CTD" id="599"/>
<dbReference type="VEuPathDB" id="HostDB:ENSBTAG00000019692"/>
<dbReference type="VGNC" id="VGNC:55105">
    <property type="gene designation" value="BCL2L2"/>
</dbReference>
<dbReference type="eggNOG" id="KOG4728">
    <property type="taxonomic scope" value="Eukaryota"/>
</dbReference>
<dbReference type="GeneTree" id="ENSGT01130000278332"/>
<dbReference type="HOGENOM" id="CLU_085401_0_2_1"/>
<dbReference type="InParanoid" id="Q1RMX3"/>
<dbReference type="OMA" id="WMVVYLE"/>
<dbReference type="OrthoDB" id="4726at2759"/>
<dbReference type="TreeFam" id="TF315834"/>
<dbReference type="EvolutionaryTrace" id="Q1RMX3"/>
<dbReference type="Proteomes" id="UP000009136">
    <property type="component" value="Chromosome 10"/>
</dbReference>
<dbReference type="Bgee" id="ENSBTAG00000019692">
    <property type="expression patterns" value="Expressed in prefrontal cortex and 104 other cell types or tissues"/>
</dbReference>
<dbReference type="GO" id="GO:0005741">
    <property type="term" value="C:mitochondrial outer membrane"/>
    <property type="evidence" value="ECO:0000318"/>
    <property type="project" value="GO_Central"/>
</dbReference>
<dbReference type="GO" id="GO:0015267">
    <property type="term" value="F:channel activity"/>
    <property type="evidence" value="ECO:0000318"/>
    <property type="project" value="GO_Central"/>
</dbReference>
<dbReference type="GO" id="GO:0097192">
    <property type="term" value="P:extrinsic apoptotic signaling pathway in absence of ligand"/>
    <property type="evidence" value="ECO:0000318"/>
    <property type="project" value="GO_Central"/>
</dbReference>
<dbReference type="GO" id="GO:0008630">
    <property type="term" value="P:intrinsic apoptotic signaling pathway in response to DNA damage"/>
    <property type="evidence" value="ECO:0000318"/>
    <property type="project" value="GO_Central"/>
</dbReference>
<dbReference type="GO" id="GO:0043065">
    <property type="term" value="P:positive regulation of apoptotic process"/>
    <property type="evidence" value="ECO:0000318"/>
    <property type="project" value="GO_Central"/>
</dbReference>
<dbReference type="GO" id="GO:0001836">
    <property type="term" value="P:release of cytochrome c from mitochondria"/>
    <property type="evidence" value="ECO:0000318"/>
    <property type="project" value="GO_Central"/>
</dbReference>
<dbReference type="CDD" id="cd06845">
    <property type="entry name" value="Bcl-2_like"/>
    <property type="match status" value="1"/>
</dbReference>
<dbReference type="FunFam" id="1.10.437.10:FF:000001">
    <property type="entry name" value="Bcl-2-like protein 2"/>
    <property type="match status" value="1"/>
</dbReference>
<dbReference type="Gene3D" id="1.10.437.10">
    <property type="entry name" value="Blc2-like"/>
    <property type="match status" value="1"/>
</dbReference>
<dbReference type="InterPro" id="IPR013280">
    <property type="entry name" value="Apop_reg_BclW"/>
</dbReference>
<dbReference type="InterPro" id="IPR036834">
    <property type="entry name" value="Bcl-2-like_sf"/>
</dbReference>
<dbReference type="InterPro" id="IPR046371">
    <property type="entry name" value="Bcl-2_BH1-3"/>
</dbReference>
<dbReference type="InterPro" id="IPR026298">
    <property type="entry name" value="Bcl-2_fam"/>
</dbReference>
<dbReference type="InterPro" id="IPR002475">
    <property type="entry name" value="Bcl2-like"/>
</dbReference>
<dbReference type="InterPro" id="IPR020717">
    <property type="entry name" value="Bcl2_BH1_motif_CS"/>
</dbReference>
<dbReference type="InterPro" id="IPR020726">
    <property type="entry name" value="Bcl2_BH2_motif_CS"/>
</dbReference>
<dbReference type="InterPro" id="IPR003093">
    <property type="entry name" value="Bcl2_BH4"/>
</dbReference>
<dbReference type="InterPro" id="IPR020731">
    <property type="entry name" value="Bcl2_BH4_motif_CS"/>
</dbReference>
<dbReference type="PANTHER" id="PTHR11256">
    <property type="entry name" value="BCL-2 RELATED"/>
    <property type="match status" value="1"/>
</dbReference>
<dbReference type="PANTHER" id="PTHR11256:SF13">
    <property type="entry name" value="BCL-2-LIKE PROTEIN 2"/>
    <property type="match status" value="1"/>
</dbReference>
<dbReference type="Pfam" id="PF00452">
    <property type="entry name" value="Bcl-2"/>
    <property type="match status" value="1"/>
</dbReference>
<dbReference type="Pfam" id="PF02180">
    <property type="entry name" value="BH4"/>
    <property type="match status" value="1"/>
</dbReference>
<dbReference type="PRINTS" id="PR01865">
    <property type="entry name" value="APOPREGBCLW"/>
</dbReference>
<dbReference type="PRINTS" id="PR01862">
    <property type="entry name" value="BCL2FAMILY"/>
</dbReference>
<dbReference type="SMART" id="SM00337">
    <property type="entry name" value="BCL"/>
    <property type="match status" value="1"/>
</dbReference>
<dbReference type="SMART" id="SM00265">
    <property type="entry name" value="BH4"/>
    <property type="match status" value="1"/>
</dbReference>
<dbReference type="SUPFAM" id="SSF56854">
    <property type="entry name" value="Bcl-2 inhibitors of programmed cell death"/>
    <property type="match status" value="1"/>
</dbReference>
<dbReference type="PROSITE" id="PS50062">
    <property type="entry name" value="BCL2_FAMILY"/>
    <property type="match status" value="1"/>
</dbReference>
<dbReference type="PROSITE" id="PS01080">
    <property type="entry name" value="BH1"/>
    <property type="match status" value="1"/>
</dbReference>
<dbReference type="PROSITE" id="PS01258">
    <property type="entry name" value="BH2"/>
    <property type="match status" value="1"/>
</dbReference>
<dbReference type="PROSITE" id="PS01260">
    <property type="entry name" value="BH4_1"/>
    <property type="match status" value="1"/>
</dbReference>
<dbReference type="PROSITE" id="PS50063">
    <property type="entry name" value="BH4_2"/>
    <property type="match status" value="1"/>
</dbReference>